<gene>
    <name evidence="1" type="primary">trpA</name>
    <name type="ordered locus">SAR1386</name>
</gene>
<feature type="chain" id="PRO_0000098846" description="Tryptophan synthase alpha chain">
    <location>
        <begin position="1"/>
        <end position="242"/>
    </location>
</feature>
<feature type="active site" description="Proton acceptor" evidence="1">
    <location>
        <position position="31"/>
    </location>
</feature>
<feature type="active site" description="Proton acceptor" evidence="1">
    <location>
        <position position="42"/>
    </location>
</feature>
<sequence length="242" mass="27141">MTKLFIPYIMGNKDLIENATLLSENGADIIEIGVPFSDPVADGPVIMEAGQQAIKQGITIDYIFEQLEKHGNQIKCQYVLMTYYNIICHYGEQAFFEKCRDTGVYGLIIPDLPFELSQRLKQQFSHYGVKIISLVAMTTDDKRIKDIVSYAEGFIYTVTMNATTGQNGAFHPELKRKIESIKAIANVPVVAGFGIRSPQHVADIKEVADGIVIGSEIVKRFKSNTREEIIKYLQSIQQTLNN</sequence>
<evidence type="ECO:0000255" key="1">
    <source>
        <dbReference type="HAMAP-Rule" id="MF_00131"/>
    </source>
</evidence>
<protein>
    <recommendedName>
        <fullName evidence="1">Tryptophan synthase alpha chain</fullName>
        <ecNumber evidence="1">4.2.1.20</ecNumber>
    </recommendedName>
</protein>
<reference key="1">
    <citation type="journal article" date="2004" name="Proc. Natl. Acad. Sci. U.S.A.">
        <title>Complete genomes of two clinical Staphylococcus aureus strains: evidence for the rapid evolution of virulence and drug resistance.</title>
        <authorList>
            <person name="Holden M.T.G."/>
            <person name="Feil E.J."/>
            <person name="Lindsay J.A."/>
            <person name="Peacock S.J."/>
            <person name="Day N.P.J."/>
            <person name="Enright M.C."/>
            <person name="Foster T.J."/>
            <person name="Moore C.E."/>
            <person name="Hurst L."/>
            <person name="Atkin R."/>
            <person name="Barron A."/>
            <person name="Bason N."/>
            <person name="Bentley S.D."/>
            <person name="Chillingworth C."/>
            <person name="Chillingworth T."/>
            <person name="Churcher C."/>
            <person name="Clark L."/>
            <person name="Corton C."/>
            <person name="Cronin A."/>
            <person name="Doggett J."/>
            <person name="Dowd L."/>
            <person name="Feltwell T."/>
            <person name="Hance Z."/>
            <person name="Harris B."/>
            <person name="Hauser H."/>
            <person name="Holroyd S."/>
            <person name="Jagels K."/>
            <person name="James K.D."/>
            <person name="Lennard N."/>
            <person name="Line A."/>
            <person name="Mayes R."/>
            <person name="Moule S."/>
            <person name="Mungall K."/>
            <person name="Ormond D."/>
            <person name="Quail M.A."/>
            <person name="Rabbinowitsch E."/>
            <person name="Rutherford K.M."/>
            <person name="Sanders M."/>
            <person name="Sharp S."/>
            <person name="Simmonds M."/>
            <person name="Stevens K."/>
            <person name="Whitehead S."/>
            <person name="Barrell B.G."/>
            <person name="Spratt B.G."/>
            <person name="Parkhill J."/>
        </authorList>
    </citation>
    <scope>NUCLEOTIDE SEQUENCE [LARGE SCALE GENOMIC DNA]</scope>
    <source>
        <strain>MRSA252</strain>
    </source>
</reference>
<accession>Q6GH32</accession>
<organism>
    <name type="scientific">Staphylococcus aureus (strain MRSA252)</name>
    <dbReference type="NCBI Taxonomy" id="282458"/>
    <lineage>
        <taxon>Bacteria</taxon>
        <taxon>Bacillati</taxon>
        <taxon>Bacillota</taxon>
        <taxon>Bacilli</taxon>
        <taxon>Bacillales</taxon>
        <taxon>Staphylococcaceae</taxon>
        <taxon>Staphylococcus</taxon>
    </lineage>
</organism>
<keyword id="KW-0028">Amino-acid biosynthesis</keyword>
<keyword id="KW-0057">Aromatic amino acid biosynthesis</keyword>
<keyword id="KW-0456">Lyase</keyword>
<keyword id="KW-0822">Tryptophan biosynthesis</keyword>
<comment type="function">
    <text evidence="1">The alpha subunit is responsible for the aldol cleavage of indoleglycerol phosphate to indole and glyceraldehyde 3-phosphate.</text>
</comment>
<comment type="catalytic activity">
    <reaction evidence="1">
        <text>(1S,2R)-1-C-(indol-3-yl)glycerol 3-phosphate + L-serine = D-glyceraldehyde 3-phosphate + L-tryptophan + H2O</text>
        <dbReference type="Rhea" id="RHEA:10532"/>
        <dbReference type="ChEBI" id="CHEBI:15377"/>
        <dbReference type="ChEBI" id="CHEBI:33384"/>
        <dbReference type="ChEBI" id="CHEBI:57912"/>
        <dbReference type="ChEBI" id="CHEBI:58866"/>
        <dbReference type="ChEBI" id="CHEBI:59776"/>
        <dbReference type="EC" id="4.2.1.20"/>
    </reaction>
</comment>
<comment type="pathway">
    <text evidence="1">Amino-acid biosynthesis; L-tryptophan biosynthesis; L-tryptophan from chorismate: step 5/5.</text>
</comment>
<comment type="subunit">
    <text evidence="1">Tetramer of two alpha and two beta chains.</text>
</comment>
<comment type="similarity">
    <text evidence="1">Belongs to the TrpA family.</text>
</comment>
<proteinExistence type="inferred from homology"/>
<dbReference type="EC" id="4.2.1.20" evidence="1"/>
<dbReference type="EMBL" id="BX571856">
    <property type="protein sequence ID" value="CAG40384.1"/>
    <property type="molecule type" value="Genomic_DNA"/>
</dbReference>
<dbReference type="RefSeq" id="WP_000163621.1">
    <property type="nucleotide sequence ID" value="NC_002952.2"/>
</dbReference>
<dbReference type="SMR" id="Q6GH32"/>
<dbReference type="KEGG" id="sar:SAR1386"/>
<dbReference type="HOGENOM" id="CLU_016734_0_0_9"/>
<dbReference type="UniPathway" id="UPA00035">
    <property type="reaction ID" value="UER00044"/>
</dbReference>
<dbReference type="Proteomes" id="UP000000596">
    <property type="component" value="Chromosome"/>
</dbReference>
<dbReference type="GO" id="GO:0005829">
    <property type="term" value="C:cytosol"/>
    <property type="evidence" value="ECO:0007669"/>
    <property type="project" value="TreeGrafter"/>
</dbReference>
<dbReference type="GO" id="GO:0004834">
    <property type="term" value="F:tryptophan synthase activity"/>
    <property type="evidence" value="ECO:0007669"/>
    <property type="project" value="UniProtKB-UniRule"/>
</dbReference>
<dbReference type="CDD" id="cd04724">
    <property type="entry name" value="Tryptophan_synthase_alpha"/>
    <property type="match status" value="1"/>
</dbReference>
<dbReference type="Gene3D" id="3.20.20.70">
    <property type="entry name" value="Aldolase class I"/>
    <property type="match status" value="1"/>
</dbReference>
<dbReference type="HAMAP" id="MF_00131">
    <property type="entry name" value="Trp_synth_alpha"/>
    <property type="match status" value="1"/>
</dbReference>
<dbReference type="InterPro" id="IPR013785">
    <property type="entry name" value="Aldolase_TIM"/>
</dbReference>
<dbReference type="InterPro" id="IPR011060">
    <property type="entry name" value="RibuloseP-bd_barrel"/>
</dbReference>
<dbReference type="InterPro" id="IPR018204">
    <property type="entry name" value="Trp_synthase_alpha_AS"/>
</dbReference>
<dbReference type="InterPro" id="IPR002028">
    <property type="entry name" value="Trp_synthase_suA"/>
</dbReference>
<dbReference type="NCBIfam" id="TIGR00262">
    <property type="entry name" value="trpA"/>
    <property type="match status" value="1"/>
</dbReference>
<dbReference type="PANTHER" id="PTHR43406:SF1">
    <property type="entry name" value="TRYPTOPHAN SYNTHASE ALPHA CHAIN, CHLOROPLASTIC"/>
    <property type="match status" value="1"/>
</dbReference>
<dbReference type="PANTHER" id="PTHR43406">
    <property type="entry name" value="TRYPTOPHAN SYNTHASE, ALPHA CHAIN"/>
    <property type="match status" value="1"/>
</dbReference>
<dbReference type="Pfam" id="PF00290">
    <property type="entry name" value="Trp_syntA"/>
    <property type="match status" value="1"/>
</dbReference>
<dbReference type="SUPFAM" id="SSF51366">
    <property type="entry name" value="Ribulose-phoshate binding barrel"/>
    <property type="match status" value="1"/>
</dbReference>
<dbReference type="PROSITE" id="PS00167">
    <property type="entry name" value="TRP_SYNTHASE_ALPHA"/>
    <property type="match status" value="1"/>
</dbReference>
<name>TRPA_STAAR</name>